<dbReference type="EC" id="6.3.5.5" evidence="1"/>
<dbReference type="EMBL" id="AL591688">
    <property type="protein sequence ID" value="CAC46899.1"/>
    <property type="molecule type" value="Genomic_DNA"/>
</dbReference>
<dbReference type="RefSeq" id="NP_386426.1">
    <property type="nucleotide sequence ID" value="NC_003047.1"/>
</dbReference>
<dbReference type="RefSeq" id="WP_010969856.1">
    <property type="nucleotide sequence ID" value="NC_003047.1"/>
</dbReference>
<dbReference type="SMR" id="Q92N95"/>
<dbReference type="MEROPS" id="C26.954"/>
<dbReference type="EnsemblBacteria" id="CAC46899">
    <property type="protein sequence ID" value="CAC46899"/>
    <property type="gene ID" value="SMc01569"/>
</dbReference>
<dbReference type="KEGG" id="sme:SMc01569"/>
<dbReference type="PATRIC" id="fig|266834.11.peg.3800"/>
<dbReference type="eggNOG" id="COG0505">
    <property type="taxonomic scope" value="Bacteria"/>
</dbReference>
<dbReference type="HOGENOM" id="CLU_035901_2_2_5"/>
<dbReference type="OrthoDB" id="9804328at2"/>
<dbReference type="UniPathway" id="UPA00068">
    <property type="reaction ID" value="UER00171"/>
</dbReference>
<dbReference type="UniPathway" id="UPA00070">
    <property type="reaction ID" value="UER00115"/>
</dbReference>
<dbReference type="Proteomes" id="UP000001976">
    <property type="component" value="Chromosome"/>
</dbReference>
<dbReference type="GO" id="GO:0005524">
    <property type="term" value="F:ATP binding"/>
    <property type="evidence" value="ECO:0007669"/>
    <property type="project" value="UniProtKB-UniRule"/>
</dbReference>
<dbReference type="GO" id="GO:0004088">
    <property type="term" value="F:carbamoyl-phosphate synthase (glutamine-hydrolyzing) activity"/>
    <property type="evidence" value="ECO:0007669"/>
    <property type="project" value="UniProtKB-UniRule"/>
</dbReference>
<dbReference type="GO" id="GO:0004359">
    <property type="term" value="F:glutaminase activity"/>
    <property type="evidence" value="ECO:0007669"/>
    <property type="project" value="RHEA"/>
</dbReference>
<dbReference type="GO" id="GO:0006207">
    <property type="term" value="P:'de novo' pyrimidine nucleobase biosynthetic process"/>
    <property type="evidence" value="ECO:0007669"/>
    <property type="project" value="InterPro"/>
</dbReference>
<dbReference type="GO" id="GO:0044205">
    <property type="term" value="P:'de novo' UMP biosynthetic process"/>
    <property type="evidence" value="ECO:0007669"/>
    <property type="project" value="UniProtKB-UniRule"/>
</dbReference>
<dbReference type="GO" id="GO:0006541">
    <property type="term" value="P:glutamine metabolic process"/>
    <property type="evidence" value="ECO:0007669"/>
    <property type="project" value="InterPro"/>
</dbReference>
<dbReference type="GO" id="GO:0006526">
    <property type="term" value="P:L-arginine biosynthetic process"/>
    <property type="evidence" value="ECO:0007669"/>
    <property type="project" value="UniProtKB-UniRule"/>
</dbReference>
<dbReference type="CDD" id="cd01744">
    <property type="entry name" value="GATase1_CPSase"/>
    <property type="match status" value="1"/>
</dbReference>
<dbReference type="FunFam" id="3.50.30.20:FF:000001">
    <property type="entry name" value="Carbamoyl-phosphate synthase small chain"/>
    <property type="match status" value="1"/>
</dbReference>
<dbReference type="Gene3D" id="3.40.50.880">
    <property type="match status" value="1"/>
</dbReference>
<dbReference type="Gene3D" id="3.50.30.20">
    <property type="entry name" value="Carbamoyl-phosphate synthase small subunit, N-terminal domain"/>
    <property type="match status" value="1"/>
</dbReference>
<dbReference type="HAMAP" id="MF_01209">
    <property type="entry name" value="CPSase_S_chain"/>
    <property type="match status" value="1"/>
</dbReference>
<dbReference type="InterPro" id="IPR050472">
    <property type="entry name" value="Anth_synth/Amidotransfase"/>
</dbReference>
<dbReference type="InterPro" id="IPR006274">
    <property type="entry name" value="CarbamoylP_synth_ssu"/>
</dbReference>
<dbReference type="InterPro" id="IPR002474">
    <property type="entry name" value="CarbamoylP_synth_ssu_N"/>
</dbReference>
<dbReference type="InterPro" id="IPR036480">
    <property type="entry name" value="CarbP_synth_ssu_N_sf"/>
</dbReference>
<dbReference type="InterPro" id="IPR029062">
    <property type="entry name" value="Class_I_gatase-like"/>
</dbReference>
<dbReference type="InterPro" id="IPR035686">
    <property type="entry name" value="CPSase_GATase1"/>
</dbReference>
<dbReference type="InterPro" id="IPR017926">
    <property type="entry name" value="GATASE"/>
</dbReference>
<dbReference type="NCBIfam" id="TIGR01368">
    <property type="entry name" value="CPSaseIIsmall"/>
    <property type="match status" value="1"/>
</dbReference>
<dbReference type="NCBIfam" id="NF009475">
    <property type="entry name" value="PRK12838.1"/>
    <property type="match status" value="1"/>
</dbReference>
<dbReference type="PANTHER" id="PTHR43418:SF7">
    <property type="entry name" value="CARBAMOYL-PHOSPHATE SYNTHASE SMALL CHAIN"/>
    <property type="match status" value="1"/>
</dbReference>
<dbReference type="PANTHER" id="PTHR43418">
    <property type="entry name" value="MULTIFUNCTIONAL TRYPTOPHAN BIOSYNTHESIS PROTEIN-RELATED"/>
    <property type="match status" value="1"/>
</dbReference>
<dbReference type="Pfam" id="PF00988">
    <property type="entry name" value="CPSase_sm_chain"/>
    <property type="match status" value="1"/>
</dbReference>
<dbReference type="Pfam" id="PF00117">
    <property type="entry name" value="GATase"/>
    <property type="match status" value="1"/>
</dbReference>
<dbReference type="PRINTS" id="PR00097">
    <property type="entry name" value="ANTSNTHASEII"/>
</dbReference>
<dbReference type="PRINTS" id="PR00099">
    <property type="entry name" value="CPSGATASE"/>
</dbReference>
<dbReference type="PRINTS" id="PR00096">
    <property type="entry name" value="GATASE"/>
</dbReference>
<dbReference type="SMART" id="SM01097">
    <property type="entry name" value="CPSase_sm_chain"/>
    <property type="match status" value="1"/>
</dbReference>
<dbReference type="SUPFAM" id="SSF52021">
    <property type="entry name" value="Carbamoyl phosphate synthetase, small subunit N-terminal domain"/>
    <property type="match status" value="1"/>
</dbReference>
<dbReference type="SUPFAM" id="SSF52317">
    <property type="entry name" value="Class I glutamine amidotransferase-like"/>
    <property type="match status" value="1"/>
</dbReference>
<dbReference type="PROSITE" id="PS51273">
    <property type="entry name" value="GATASE_TYPE_1"/>
    <property type="match status" value="1"/>
</dbReference>
<gene>
    <name evidence="1" type="primary">carA</name>
    <name type="ordered locus">R02320</name>
    <name type="ORF">SMc01569</name>
</gene>
<reference key="1">
    <citation type="journal article" date="2001" name="Proc. Natl. Acad. Sci. U.S.A.">
        <title>Analysis of the chromosome sequence of the legume symbiont Sinorhizobium meliloti strain 1021.</title>
        <authorList>
            <person name="Capela D."/>
            <person name="Barloy-Hubler F."/>
            <person name="Gouzy J."/>
            <person name="Bothe G."/>
            <person name="Ampe F."/>
            <person name="Batut J."/>
            <person name="Boistard P."/>
            <person name="Becker A."/>
            <person name="Boutry M."/>
            <person name="Cadieu E."/>
            <person name="Dreano S."/>
            <person name="Gloux S."/>
            <person name="Godrie T."/>
            <person name="Goffeau A."/>
            <person name="Kahn D."/>
            <person name="Kiss E."/>
            <person name="Lelaure V."/>
            <person name="Masuy D."/>
            <person name="Pohl T."/>
            <person name="Portetelle D."/>
            <person name="Puehler A."/>
            <person name="Purnelle B."/>
            <person name="Ramsperger U."/>
            <person name="Renard C."/>
            <person name="Thebault P."/>
            <person name="Vandenbol M."/>
            <person name="Weidner S."/>
            <person name="Galibert F."/>
        </authorList>
    </citation>
    <scope>NUCLEOTIDE SEQUENCE [LARGE SCALE GENOMIC DNA]</scope>
    <source>
        <strain>1021</strain>
    </source>
</reference>
<reference key="2">
    <citation type="journal article" date="2001" name="Science">
        <title>The composite genome of the legume symbiont Sinorhizobium meliloti.</title>
        <authorList>
            <person name="Galibert F."/>
            <person name="Finan T.M."/>
            <person name="Long S.R."/>
            <person name="Puehler A."/>
            <person name="Abola P."/>
            <person name="Ampe F."/>
            <person name="Barloy-Hubler F."/>
            <person name="Barnett M.J."/>
            <person name="Becker A."/>
            <person name="Boistard P."/>
            <person name="Bothe G."/>
            <person name="Boutry M."/>
            <person name="Bowser L."/>
            <person name="Buhrmester J."/>
            <person name="Cadieu E."/>
            <person name="Capela D."/>
            <person name="Chain P."/>
            <person name="Cowie A."/>
            <person name="Davis R.W."/>
            <person name="Dreano S."/>
            <person name="Federspiel N.A."/>
            <person name="Fisher R.F."/>
            <person name="Gloux S."/>
            <person name="Godrie T."/>
            <person name="Goffeau A."/>
            <person name="Golding B."/>
            <person name="Gouzy J."/>
            <person name="Gurjal M."/>
            <person name="Hernandez-Lucas I."/>
            <person name="Hong A."/>
            <person name="Huizar L."/>
            <person name="Hyman R.W."/>
            <person name="Jones T."/>
            <person name="Kahn D."/>
            <person name="Kahn M.L."/>
            <person name="Kalman S."/>
            <person name="Keating D.H."/>
            <person name="Kiss E."/>
            <person name="Komp C."/>
            <person name="Lelaure V."/>
            <person name="Masuy D."/>
            <person name="Palm C."/>
            <person name="Peck M.C."/>
            <person name="Pohl T.M."/>
            <person name="Portetelle D."/>
            <person name="Purnelle B."/>
            <person name="Ramsperger U."/>
            <person name="Surzycki R."/>
            <person name="Thebault P."/>
            <person name="Vandenbol M."/>
            <person name="Vorhoelter F.J."/>
            <person name="Weidner S."/>
            <person name="Wells D.H."/>
            <person name="Wong K."/>
            <person name="Yeh K.-C."/>
            <person name="Batut J."/>
        </authorList>
    </citation>
    <scope>NUCLEOTIDE SEQUENCE [LARGE SCALE GENOMIC DNA]</scope>
    <source>
        <strain>1021</strain>
    </source>
</reference>
<comment type="function">
    <text evidence="1">Small subunit of the glutamine-dependent carbamoyl phosphate synthetase (CPSase). CPSase catalyzes the formation of carbamoyl phosphate from the ammonia moiety of glutamine, carbonate, and phosphate donated by ATP, constituting the first step of 2 biosynthetic pathways, one leading to arginine and/or urea and the other to pyrimidine nucleotides. The small subunit (glutamine amidotransferase) binds and cleaves glutamine to supply the large subunit with the substrate ammonia.</text>
</comment>
<comment type="catalytic activity">
    <reaction evidence="1">
        <text>hydrogencarbonate + L-glutamine + 2 ATP + H2O = carbamoyl phosphate + L-glutamate + 2 ADP + phosphate + 2 H(+)</text>
        <dbReference type="Rhea" id="RHEA:18633"/>
        <dbReference type="ChEBI" id="CHEBI:15377"/>
        <dbReference type="ChEBI" id="CHEBI:15378"/>
        <dbReference type="ChEBI" id="CHEBI:17544"/>
        <dbReference type="ChEBI" id="CHEBI:29985"/>
        <dbReference type="ChEBI" id="CHEBI:30616"/>
        <dbReference type="ChEBI" id="CHEBI:43474"/>
        <dbReference type="ChEBI" id="CHEBI:58228"/>
        <dbReference type="ChEBI" id="CHEBI:58359"/>
        <dbReference type="ChEBI" id="CHEBI:456216"/>
        <dbReference type="EC" id="6.3.5.5"/>
    </reaction>
</comment>
<comment type="catalytic activity">
    <molecule>Carbamoyl phosphate synthase small chain</molecule>
    <reaction evidence="1">
        <text>L-glutamine + H2O = L-glutamate + NH4(+)</text>
        <dbReference type="Rhea" id="RHEA:15889"/>
        <dbReference type="ChEBI" id="CHEBI:15377"/>
        <dbReference type="ChEBI" id="CHEBI:28938"/>
        <dbReference type="ChEBI" id="CHEBI:29985"/>
        <dbReference type="ChEBI" id="CHEBI:58359"/>
    </reaction>
</comment>
<comment type="pathway">
    <text evidence="1">Amino-acid biosynthesis; L-arginine biosynthesis; carbamoyl phosphate from bicarbonate: step 1/1.</text>
</comment>
<comment type="pathway">
    <text evidence="1">Pyrimidine metabolism; UMP biosynthesis via de novo pathway; (S)-dihydroorotate from bicarbonate: step 1/3.</text>
</comment>
<comment type="subunit">
    <text evidence="1">Composed of two chains; the small (or glutamine) chain promotes the hydrolysis of glutamine to ammonia, which is used by the large (or ammonia) chain to synthesize carbamoyl phosphate. Tetramer of heterodimers (alpha,beta)4.</text>
</comment>
<comment type="similarity">
    <text evidence="1">Belongs to the CarA family.</text>
</comment>
<feature type="chain" id="PRO_0000112310" description="Carbamoyl phosphate synthase small chain">
    <location>
        <begin position="1"/>
        <end position="401"/>
    </location>
</feature>
<feature type="domain" description="Glutamine amidotransferase type-1" evidence="1">
    <location>
        <begin position="207"/>
        <end position="395"/>
    </location>
</feature>
<feature type="region of interest" description="CPSase" evidence="1">
    <location>
        <begin position="1"/>
        <end position="203"/>
    </location>
</feature>
<feature type="active site" description="Nucleophile" evidence="1">
    <location>
        <position position="284"/>
    </location>
</feature>
<feature type="active site" evidence="1">
    <location>
        <position position="368"/>
    </location>
</feature>
<feature type="active site" evidence="1">
    <location>
        <position position="370"/>
    </location>
</feature>
<feature type="binding site" evidence="1">
    <location>
        <position position="56"/>
    </location>
    <ligand>
        <name>L-glutamine</name>
        <dbReference type="ChEBI" id="CHEBI:58359"/>
    </ligand>
</feature>
<feature type="binding site" evidence="1">
    <location>
        <position position="255"/>
    </location>
    <ligand>
        <name>L-glutamine</name>
        <dbReference type="ChEBI" id="CHEBI:58359"/>
    </ligand>
</feature>
<feature type="binding site" evidence="1">
    <location>
        <position position="257"/>
    </location>
    <ligand>
        <name>L-glutamine</name>
        <dbReference type="ChEBI" id="CHEBI:58359"/>
    </ligand>
</feature>
<feature type="binding site" evidence="1">
    <location>
        <position position="285"/>
    </location>
    <ligand>
        <name>L-glutamine</name>
        <dbReference type="ChEBI" id="CHEBI:58359"/>
    </ligand>
</feature>
<feature type="binding site" evidence="1">
    <location>
        <position position="288"/>
    </location>
    <ligand>
        <name>L-glutamine</name>
        <dbReference type="ChEBI" id="CHEBI:58359"/>
    </ligand>
</feature>
<feature type="binding site" evidence="1">
    <location>
        <position position="326"/>
    </location>
    <ligand>
        <name>L-glutamine</name>
        <dbReference type="ChEBI" id="CHEBI:58359"/>
    </ligand>
</feature>
<feature type="binding site" evidence="1">
    <location>
        <position position="328"/>
    </location>
    <ligand>
        <name>L-glutamine</name>
        <dbReference type="ChEBI" id="CHEBI:58359"/>
    </ligand>
</feature>
<feature type="binding site" evidence="1">
    <location>
        <position position="329"/>
    </location>
    <ligand>
        <name>L-glutamine</name>
        <dbReference type="ChEBI" id="CHEBI:58359"/>
    </ligand>
</feature>
<name>CARA_RHIME</name>
<accession>Q92N95</accession>
<sequence length="401" mass="43129">MTATPAWTIQKPTALLVLADGTVIEGKGIGATGTVQAEVCFNTALTGYQEILTDPSYLGQIVTFTFPHIGNIGANDEDIEDLTPAARHGAVGVIFKADITEPSNYRAAKHLDAWLKARGIIGLCGIDTRALTAWIRENGMPNAVIAHDPAGVFDVEALKAEAKAWSGLEGLDLAKVATSGQSYRWNEKPWVWNEGYSTLGETDAAYHVVALDYGVKRNILRLFAGLNCRVTVVPAQTSAEEVLALKPDGIFLSNGPGDPAATGEYAVPVIQDLLKTDIPVFGICLGHQMLALALGARTEKMHQGHHGANHPVKDHTTGKVEIVSMNHGFAVDANSLPQGVEQTHISLFDGTNCGLRVDGRPVFSVQHHPEASPGPQDSHYLFRRFLNLIREKKGEPALAER</sequence>
<protein>
    <recommendedName>
        <fullName evidence="1">Carbamoyl phosphate synthase small chain</fullName>
        <ecNumber evidence="1">6.3.5.5</ecNumber>
    </recommendedName>
    <alternativeName>
        <fullName evidence="1">Carbamoyl phosphate synthetase glutamine chain</fullName>
    </alternativeName>
</protein>
<organism>
    <name type="scientific">Rhizobium meliloti (strain 1021)</name>
    <name type="common">Ensifer meliloti</name>
    <name type="synonym">Sinorhizobium meliloti</name>
    <dbReference type="NCBI Taxonomy" id="266834"/>
    <lineage>
        <taxon>Bacteria</taxon>
        <taxon>Pseudomonadati</taxon>
        <taxon>Pseudomonadota</taxon>
        <taxon>Alphaproteobacteria</taxon>
        <taxon>Hyphomicrobiales</taxon>
        <taxon>Rhizobiaceae</taxon>
        <taxon>Sinorhizobium/Ensifer group</taxon>
        <taxon>Sinorhizobium</taxon>
    </lineage>
</organism>
<evidence type="ECO:0000255" key="1">
    <source>
        <dbReference type="HAMAP-Rule" id="MF_01209"/>
    </source>
</evidence>
<keyword id="KW-0028">Amino-acid biosynthesis</keyword>
<keyword id="KW-0055">Arginine biosynthesis</keyword>
<keyword id="KW-0067">ATP-binding</keyword>
<keyword id="KW-0315">Glutamine amidotransferase</keyword>
<keyword id="KW-0436">Ligase</keyword>
<keyword id="KW-0547">Nucleotide-binding</keyword>
<keyword id="KW-0665">Pyrimidine biosynthesis</keyword>
<keyword id="KW-1185">Reference proteome</keyword>
<proteinExistence type="inferred from homology"/>